<accession>Q0IHV9</accession>
<accession>B1WAU0</accession>
<reference key="1">
    <citation type="submission" date="2006-09" db="EMBL/GenBank/DDBJ databases">
        <authorList>
            <consortium name="NIH - Xenopus Gene Collection (XGC) project"/>
        </authorList>
    </citation>
    <scope>NUCLEOTIDE SEQUENCE [LARGE SCALE MRNA]</scope>
    <source>
        <tissue>Gastrula</tissue>
        <tissue>Testis</tissue>
    </source>
</reference>
<evidence type="ECO:0000250" key="1"/>
<evidence type="ECO:0000250" key="2">
    <source>
        <dbReference type="UniProtKB" id="P26196"/>
    </source>
</evidence>
<evidence type="ECO:0000250" key="3">
    <source>
        <dbReference type="UniProtKB" id="P54824"/>
    </source>
</evidence>
<evidence type="ECO:0000255" key="4">
    <source>
        <dbReference type="PROSITE-ProRule" id="PRU00541"/>
    </source>
</evidence>
<evidence type="ECO:0000255" key="5">
    <source>
        <dbReference type="PROSITE-ProRule" id="PRU00542"/>
    </source>
</evidence>
<evidence type="ECO:0000256" key="6">
    <source>
        <dbReference type="SAM" id="MobiDB-lite"/>
    </source>
</evidence>
<evidence type="ECO:0000305" key="7"/>
<feature type="chain" id="PRO_0000274534" description="Probable ATP-dependent RNA helicase ddx6">
    <location>
        <begin position="1"/>
        <end position="481"/>
    </location>
</feature>
<feature type="domain" description="Helicase ATP-binding" evidence="4">
    <location>
        <begin position="126"/>
        <end position="297"/>
    </location>
</feature>
<feature type="domain" description="Helicase C-terminal" evidence="5">
    <location>
        <begin position="307"/>
        <end position="467"/>
    </location>
</feature>
<feature type="region of interest" description="Disordered" evidence="6">
    <location>
        <begin position="1"/>
        <end position="72"/>
    </location>
</feature>
<feature type="short sequence motif" description="Q motif">
    <location>
        <begin position="95"/>
        <end position="123"/>
    </location>
</feature>
<feature type="short sequence motif" description="DEAD box">
    <location>
        <begin position="245"/>
        <end position="248"/>
    </location>
</feature>
<feature type="compositionally biased region" description="Polar residues" evidence="6">
    <location>
        <begin position="41"/>
        <end position="51"/>
    </location>
</feature>
<feature type="compositionally biased region" description="Low complexity" evidence="6">
    <location>
        <begin position="52"/>
        <end position="63"/>
    </location>
</feature>
<feature type="binding site" evidence="4">
    <location>
        <begin position="139"/>
        <end position="146"/>
    </location>
    <ligand>
        <name>ATP</name>
        <dbReference type="ChEBI" id="CHEBI:30616"/>
    </ligand>
</feature>
<organism>
    <name type="scientific">Xenopus tropicalis</name>
    <name type="common">Western clawed frog</name>
    <name type="synonym">Silurana tropicalis</name>
    <dbReference type="NCBI Taxonomy" id="8364"/>
    <lineage>
        <taxon>Eukaryota</taxon>
        <taxon>Metazoa</taxon>
        <taxon>Chordata</taxon>
        <taxon>Craniata</taxon>
        <taxon>Vertebrata</taxon>
        <taxon>Euteleostomi</taxon>
        <taxon>Amphibia</taxon>
        <taxon>Batrachia</taxon>
        <taxon>Anura</taxon>
        <taxon>Pipoidea</taxon>
        <taxon>Pipidae</taxon>
        <taxon>Xenopodinae</taxon>
        <taxon>Xenopus</taxon>
        <taxon>Silurana</taxon>
    </lineage>
</organism>
<name>DDX6_XENTR</name>
<dbReference type="EC" id="3.6.4.13" evidence="2"/>
<dbReference type="EMBL" id="BC122944">
    <property type="protein sequence ID" value="AAI22945.1"/>
    <property type="molecule type" value="mRNA"/>
</dbReference>
<dbReference type="EMBL" id="BC161499">
    <property type="protein sequence ID" value="AAI61499.1"/>
    <property type="molecule type" value="mRNA"/>
</dbReference>
<dbReference type="RefSeq" id="NP_001072584.1">
    <property type="nucleotide sequence ID" value="NM_001079116.1"/>
</dbReference>
<dbReference type="SMR" id="Q0IHV9"/>
<dbReference type="FunCoup" id="Q0IHV9">
    <property type="interactions" value="3705"/>
</dbReference>
<dbReference type="STRING" id="8364.ENSXETP00000019545"/>
<dbReference type="PaxDb" id="8364-ENSXETP00000058366"/>
<dbReference type="DNASU" id="780039"/>
<dbReference type="GeneID" id="780039"/>
<dbReference type="KEGG" id="xtr:780039"/>
<dbReference type="AGR" id="Xenbase:XB-GENE-922227"/>
<dbReference type="CTD" id="1656"/>
<dbReference type="Xenbase" id="XB-GENE-922227">
    <property type="gene designation" value="ddx6"/>
</dbReference>
<dbReference type="eggNOG" id="KOG0326">
    <property type="taxonomic scope" value="Eukaryota"/>
</dbReference>
<dbReference type="HOGENOM" id="CLU_003041_30_0_1"/>
<dbReference type="InParanoid" id="Q0IHV9"/>
<dbReference type="OMA" id="PRDHQMI"/>
<dbReference type="OrthoDB" id="10265785at2759"/>
<dbReference type="PhylomeDB" id="Q0IHV9"/>
<dbReference type="Reactome" id="R-XTR-430039">
    <property type="pathway name" value="mRNA decay by 5' to 3' exoribonuclease"/>
</dbReference>
<dbReference type="Proteomes" id="UP000008143">
    <property type="component" value="Chromosome 7"/>
</dbReference>
<dbReference type="Bgee" id="ENSXETG00000010061">
    <property type="expression patterns" value="Expressed in skeletal muscle tissue and 13 other cell types or tissues"/>
</dbReference>
<dbReference type="GO" id="GO:0005737">
    <property type="term" value="C:cytoplasm"/>
    <property type="evidence" value="ECO:0000250"/>
    <property type="project" value="UniProtKB"/>
</dbReference>
<dbReference type="GO" id="GO:0005634">
    <property type="term" value="C:nucleus"/>
    <property type="evidence" value="ECO:0000250"/>
    <property type="project" value="UniProtKB"/>
</dbReference>
<dbReference type="GO" id="GO:0000932">
    <property type="term" value="C:P-body"/>
    <property type="evidence" value="ECO:0000250"/>
    <property type="project" value="UniProtKB"/>
</dbReference>
<dbReference type="GO" id="GO:1990904">
    <property type="term" value="C:ribonucleoprotein complex"/>
    <property type="evidence" value="ECO:0007669"/>
    <property type="project" value="UniProtKB-KW"/>
</dbReference>
<dbReference type="GO" id="GO:0005524">
    <property type="term" value="F:ATP binding"/>
    <property type="evidence" value="ECO:0007669"/>
    <property type="project" value="UniProtKB-KW"/>
</dbReference>
<dbReference type="GO" id="GO:0016887">
    <property type="term" value="F:ATP hydrolysis activity"/>
    <property type="evidence" value="ECO:0007669"/>
    <property type="project" value="RHEA"/>
</dbReference>
<dbReference type="GO" id="GO:0003723">
    <property type="term" value="F:RNA binding"/>
    <property type="evidence" value="ECO:0007669"/>
    <property type="project" value="UniProtKB-KW"/>
</dbReference>
<dbReference type="GO" id="GO:0003724">
    <property type="term" value="F:RNA helicase activity"/>
    <property type="evidence" value="ECO:0007669"/>
    <property type="project" value="UniProtKB-EC"/>
</dbReference>
<dbReference type="GO" id="GO:0035278">
    <property type="term" value="P:miRNA-mediated gene silencing by inhibition of translation"/>
    <property type="evidence" value="ECO:0000250"/>
    <property type="project" value="UniProtKB"/>
</dbReference>
<dbReference type="GO" id="GO:0017148">
    <property type="term" value="P:negative regulation of translation"/>
    <property type="evidence" value="ECO:0000250"/>
    <property type="project" value="UniProtKB"/>
</dbReference>
<dbReference type="GO" id="GO:0033962">
    <property type="term" value="P:P-body assembly"/>
    <property type="evidence" value="ECO:0000250"/>
    <property type="project" value="UniProtKB"/>
</dbReference>
<dbReference type="GO" id="GO:0009408">
    <property type="term" value="P:response to heat"/>
    <property type="evidence" value="ECO:0007669"/>
    <property type="project" value="Ensembl"/>
</dbReference>
<dbReference type="GO" id="GO:0034063">
    <property type="term" value="P:stress granule assembly"/>
    <property type="evidence" value="ECO:0007669"/>
    <property type="project" value="Ensembl"/>
</dbReference>
<dbReference type="CDD" id="cd17940">
    <property type="entry name" value="DEADc_DDX6"/>
    <property type="match status" value="1"/>
</dbReference>
<dbReference type="CDD" id="cd18787">
    <property type="entry name" value="SF2_C_DEAD"/>
    <property type="match status" value="1"/>
</dbReference>
<dbReference type="FunFam" id="3.40.50.300:FF:000114">
    <property type="entry name" value="ATP-dependent RNA helicase DDX6"/>
    <property type="match status" value="1"/>
</dbReference>
<dbReference type="FunFam" id="3.40.50.300:FF:000364">
    <property type="entry name" value="ATP-dependent RNA helicase DDX6"/>
    <property type="match status" value="1"/>
</dbReference>
<dbReference type="Gene3D" id="3.40.50.300">
    <property type="entry name" value="P-loop containing nucleotide triphosphate hydrolases"/>
    <property type="match status" value="2"/>
</dbReference>
<dbReference type="InterPro" id="IPR011545">
    <property type="entry name" value="DEAD/DEAH_box_helicase_dom"/>
</dbReference>
<dbReference type="InterPro" id="IPR014001">
    <property type="entry name" value="Helicase_ATP-bd"/>
</dbReference>
<dbReference type="InterPro" id="IPR001650">
    <property type="entry name" value="Helicase_C-like"/>
</dbReference>
<dbReference type="InterPro" id="IPR027417">
    <property type="entry name" value="P-loop_NTPase"/>
</dbReference>
<dbReference type="InterPro" id="IPR000629">
    <property type="entry name" value="RNA-helicase_DEAD-box_CS"/>
</dbReference>
<dbReference type="InterPro" id="IPR014014">
    <property type="entry name" value="RNA_helicase_DEAD_Q_motif"/>
</dbReference>
<dbReference type="PANTHER" id="PTHR47960">
    <property type="entry name" value="DEAD-BOX ATP-DEPENDENT RNA HELICASE 50"/>
    <property type="match status" value="1"/>
</dbReference>
<dbReference type="Pfam" id="PF00270">
    <property type="entry name" value="DEAD"/>
    <property type="match status" value="1"/>
</dbReference>
<dbReference type="Pfam" id="PF00271">
    <property type="entry name" value="Helicase_C"/>
    <property type="match status" value="1"/>
</dbReference>
<dbReference type="SMART" id="SM00487">
    <property type="entry name" value="DEXDc"/>
    <property type="match status" value="1"/>
</dbReference>
<dbReference type="SMART" id="SM00490">
    <property type="entry name" value="HELICc"/>
    <property type="match status" value="1"/>
</dbReference>
<dbReference type="SUPFAM" id="SSF52540">
    <property type="entry name" value="P-loop containing nucleoside triphosphate hydrolases"/>
    <property type="match status" value="1"/>
</dbReference>
<dbReference type="PROSITE" id="PS00039">
    <property type="entry name" value="DEAD_ATP_HELICASE"/>
    <property type="match status" value="1"/>
</dbReference>
<dbReference type="PROSITE" id="PS51192">
    <property type="entry name" value="HELICASE_ATP_BIND_1"/>
    <property type="match status" value="1"/>
</dbReference>
<dbReference type="PROSITE" id="PS51194">
    <property type="entry name" value="HELICASE_CTER"/>
    <property type="match status" value="1"/>
</dbReference>
<dbReference type="PROSITE" id="PS51195">
    <property type="entry name" value="Q_MOTIF"/>
    <property type="match status" value="1"/>
</dbReference>
<protein>
    <recommendedName>
        <fullName>Probable ATP-dependent RNA helicase ddx6</fullName>
        <ecNumber evidence="2">3.6.4.13</ecNumber>
    </recommendedName>
    <alternativeName>
        <fullName>DEAD box protein 6</fullName>
    </alternativeName>
</protein>
<comment type="function">
    <text evidence="3">ATP-dependent RNA helicase that is an integral component of messenger ribonucleoprotein complexes (mRNPs), storage particles that mask maternal mRNAs from the translational apparatus during oocyte maturation.</text>
</comment>
<comment type="catalytic activity">
    <reaction evidence="2">
        <text>ATP + H2O = ADP + phosphate + H(+)</text>
        <dbReference type="Rhea" id="RHEA:13065"/>
        <dbReference type="ChEBI" id="CHEBI:15377"/>
        <dbReference type="ChEBI" id="CHEBI:15378"/>
        <dbReference type="ChEBI" id="CHEBI:30616"/>
        <dbReference type="ChEBI" id="CHEBI:43474"/>
        <dbReference type="ChEBI" id="CHEBI:456216"/>
        <dbReference type="EC" id="3.6.4.13"/>
    </reaction>
</comment>
<comment type="subunit">
    <text evidence="1">Component of a ribonucleoprotein (RNP) complex, composed at least of cpeb1, lsm14b/rap55b, ddx6/Xp54, ybx2/frgy2, pat1/P100, eif4enif1/4E-T and eif4e1b. Component of a ribonucleoprotein (RNP) complex, composed at least of elavl1/elrA and/or elavl2/elrB, igf2bp3/vg1RBP, ddx6/Xp54, ybx2/frgy2, lsm14b/rap55b and, in a subset of RNP complexes, stau1/staufen. Component of a ribonucleoprotein (RNP) complex, composed at least of lsm14a/rap55a, ybx2/frgy2, ddx6/Xp54 and eif4enif1/4E-T. Interacts with lsm14a/rap55a (By similarity).</text>
</comment>
<comment type="subcellular location">
    <subcellularLocation>
        <location evidence="2">Cytoplasm</location>
        <location evidence="2">P-body</location>
    </subcellularLocation>
    <subcellularLocation>
        <location evidence="2">Cytoplasm</location>
    </subcellularLocation>
    <subcellularLocation>
        <location evidence="2">Nucleus</location>
    </subcellularLocation>
    <text evidence="2">Mostly cytoplasmic. Upon cellular stress, relocalizes to stress granules.</text>
</comment>
<comment type="similarity">
    <text evidence="7">Belongs to the DEAD box helicase family. DDX6/DHH1 subfamily.</text>
</comment>
<gene>
    <name type="primary">ddx6</name>
</gene>
<proteinExistence type="evidence at transcript level"/>
<keyword id="KW-0067">ATP-binding</keyword>
<keyword id="KW-0963">Cytoplasm</keyword>
<keyword id="KW-0217">Developmental protein</keyword>
<keyword id="KW-0347">Helicase</keyword>
<keyword id="KW-0378">Hydrolase</keyword>
<keyword id="KW-0547">Nucleotide-binding</keyword>
<keyword id="KW-0539">Nucleus</keyword>
<keyword id="KW-1185">Reference proteome</keyword>
<keyword id="KW-0687">Ribonucleoprotein</keyword>
<keyword id="KW-0694">RNA-binding</keyword>
<sequence length="481" mass="53984">MSTARTENPVLMGMSSQNGQLRGPLKPSAGPGGGGTQTQQINQLKNASTINSGSQQQAQSMSSVIKPGDDWKKTLKLPPKDLRIKTSDVTSTKGNEFEDYCLKRELLMGIFEMGWEKPSPIQEESIPIALSGRDILARAKNGTGKSGAYLIPLLERLDLKKDCIQAMVIVPTRELALQVSQICIQVSKHMGGVKVMATTGGTNLRDDIMRLDDTVHVVIATPGRILDLIKKGVAKVDHIQMIVLDEADKLLSQDFVQIMEDIIITLPKNRQILLYSATFPLSVQKFMTSHLQKPYEINLMEELTLKGVTQYYAYVTERQKVHCLNTLFSRLQINQSIIFCNSSQRVELLAKKISQLGYSCFYIHAKMRQEHRNRVFHDFRNGLCRNLVCTDLFTRGIDIQAVNVVINFDFPKLAETYLHRIGRSGRFGHLGLAINLITYDDRFNLKSIEEQLGTEIKPIPSSIDKSLYVAEYHSESGEDKP</sequence>